<sequence length="394" mass="44062">MNKYKRIFLVVMDSVGIGEAPDAEQFGDLGSDTIGHIAEHMNGLHMPNMVKLGLGNIREMKGISKVEKPLGYYTKMQEKSTGKDTMTGHWEIMGLYIDTPFQVFPEGFPKELLDELEEKTGRKIIGNKPASGTEVLVELGQEQMETGSLIVYTSADSVLQIAAHEEVVPLEELYKICKIARELTLDEKYMVGRVIARPFVGEPGNFTRTPNRHDYALKPFGRTVMNELKDSDYDVIAIGKIADIYDGEGVTESLRTKSNMDGMDKLVDTLNMDFTGISFLNLVDFDALFGHRRDPQGYGEALQEYDARLPEVFEKLKEDDLLLITADHGNDPVHPGTDHTREYVPLLAYSPSMKEGGQELSLRQTFADIGATVAENFNVKMPEHGTSFLNELKK</sequence>
<gene>
    <name evidence="1" type="primary">deoB</name>
    <name type="ordered locus">BcerKBAB4_3918</name>
</gene>
<dbReference type="EC" id="5.4.2.7" evidence="1"/>
<dbReference type="EMBL" id="CP000903">
    <property type="protein sequence ID" value="ABY45086.1"/>
    <property type="molecule type" value="Genomic_DNA"/>
</dbReference>
<dbReference type="RefSeq" id="WP_002014935.1">
    <property type="nucleotide sequence ID" value="NC_010184.1"/>
</dbReference>
<dbReference type="SMR" id="A9VFJ2"/>
<dbReference type="KEGG" id="bwe:BcerKBAB4_3918"/>
<dbReference type="eggNOG" id="COG1015">
    <property type="taxonomic scope" value="Bacteria"/>
</dbReference>
<dbReference type="HOGENOM" id="CLU_053861_0_0_9"/>
<dbReference type="UniPathway" id="UPA00002">
    <property type="reaction ID" value="UER00467"/>
</dbReference>
<dbReference type="Proteomes" id="UP000002154">
    <property type="component" value="Chromosome"/>
</dbReference>
<dbReference type="GO" id="GO:0005829">
    <property type="term" value="C:cytosol"/>
    <property type="evidence" value="ECO:0007669"/>
    <property type="project" value="TreeGrafter"/>
</dbReference>
<dbReference type="GO" id="GO:0000287">
    <property type="term" value="F:magnesium ion binding"/>
    <property type="evidence" value="ECO:0007669"/>
    <property type="project" value="InterPro"/>
</dbReference>
<dbReference type="GO" id="GO:0030145">
    <property type="term" value="F:manganese ion binding"/>
    <property type="evidence" value="ECO:0007669"/>
    <property type="project" value="UniProtKB-UniRule"/>
</dbReference>
<dbReference type="GO" id="GO:0008973">
    <property type="term" value="F:phosphopentomutase activity"/>
    <property type="evidence" value="ECO:0007669"/>
    <property type="project" value="UniProtKB-UniRule"/>
</dbReference>
<dbReference type="GO" id="GO:0006018">
    <property type="term" value="P:2-deoxyribose 1-phosphate catabolic process"/>
    <property type="evidence" value="ECO:0007669"/>
    <property type="project" value="UniProtKB-UniRule"/>
</dbReference>
<dbReference type="GO" id="GO:0006015">
    <property type="term" value="P:5-phosphoribose 1-diphosphate biosynthetic process"/>
    <property type="evidence" value="ECO:0007669"/>
    <property type="project" value="UniProtKB-UniPathway"/>
</dbReference>
<dbReference type="GO" id="GO:0043094">
    <property type="term" value="P:metabolic compound salvage"/>
    <property type="evidence" value="ECO:0007669"/>
    <property type="project" value="InterPro"/>
</dbReference>
<dbReference type="GO" id="GO:0009117">
    <property type="term" value="P:nucleotide metabolic process"/>
    <property type="evidence" value="ECO:0007669"/>
    <property type="project" value="InterPro"/>
</dbReference>
<dbReference type="CDD" id="cd16009">
    <property type="entry name" value="PPM"/>
    <property type="match status" value="1"/>
</dbReference>
<dbReference type="FunFam" id="3.30.70.1250:FF:000001">
    <property type="entry name" value="Phosphopentomutase"/>
    <property type="match status" value="1"/>
</dbReference>
<dbReference type="Gene3D" id="3.40.720.10">
    <property type="entry name" value="Alkaline Phosphatase, subunit A"/>
    <property type="match status" value="1"/>
</dbReference>
<dbReference type="Gene3D" id="3.30.70.1250">
    <property type="entry name" value="Phosphopentomutase"/>
    <property type="match status" value="1"/>
</dbReference>
<dbReference type="HAMAP" id="MF_00740">
    <property type="entry name" value="Phosphopentomut"/>
    <property type="match status" value="1"/>
</dbReference>
<dbReference type="InterPro" id="IPR017850">
    <property type="entry name" value="Alkaline_phosphatase_core_sf"/>
</dbReference>
<dbReference type="InterPro" id="IPR010045">
    <property type="entry name" value="DeoB"/>
</dbReference>
<dbReference type="InterPro" id="IPR006124">
    <property type="entry name" value="Metalloenzyme"/>
</dbReference>
<dbReference type="InterPro" id="IPR024052">
    <property type="entry name" value="Phosphopentomutase_DeoB_cap_sf"/>
</dbReference>
<dbReference type="NCBIfam" id="TIGR01696">
    <property type="entry name" value="deoB"/>
    <property type="match status" value="1"/>
</dbReference>
<dbReference type="NCBIfam" id="NF003766">
    <property type="entry name" value="PRK05362.1"/>
    <property type="match status" value="1"/>
</dbReference>
<dbReference type="PANTHER" id="PTHR21110">
    <property type="entry name" value="PHOSPHOPENTOMUTASE"/>
    <property type="match status" value="1"/>
</dbReference>
<dbReference type="PANTHER" id="PTHR21110:SF0">
    <property type="entry name" value="PHOSPHOPENTOMUTASE"/>
    <property type="match status" value="1"/>
</dbReference>
<dbReference type="Pfam" id="PF01676">
    <property type="entry name" value="Metalloenzyme"/>
    <property type="match status" value="1"/>
</dbReference>
<dbReference type="PIRSF" id="PIRSF001491">
    <property type="entry name" value="Ppentomutase"/>
    <property type="match status" value="1"/>
</dbReference>
<dbReference type="SUPFAM" id="SSF53649">
    <property type="entry name" value="Alkaline phosphatase-like"/>
    <property type="match status" value="1"/>
</dbReference>
<dbReference type="SUPFAM" id="SSF143856">
    <property type="entry name" value="DeoB insert domain-like"/>
    <property type="match status" value="1"/>
</dbReference>
<evidence type="ECO:0000255" key="1">
    <source>
        <dbReference type="HAMAP-Rule" id="MF_00740"/>
    </source>
</evidence>
<reference key="1">
    <citation type="journal article" date="2008" name="Chem. Biol. Interact.">
        <title>Extending the Bacillus cereus group genomics to putative food-borne pathogens of different toxicity.</title>
        <authorList>
            <person name="Lapidus A."/>
            <person name="Goltsman E."/>
            <person name="Auger S."/>
            <person name="Galleron N."/>
            <person name="Segurens B."/>
            <person name="Dossat C."/>
            <person name="Land M.L."/>
            <person name="Broussolle V."/>
            <person name="Brillard J."/>
            <person name="Guinebretiere M.-H."/>
            <person name="Sanchis V."/>
            <person name="Nguen-the C."/>
            <person name="Lereclus D."/>
            <person name="Richardson P."/>
            <person name="Wincker P."/>
            <person name="Weissenbach J."/>
            <person name="Ehrlich S.D."/>
            <person name="Sorokin A."/>
        </authorList>
    </citation>
    <scope>NUCLEOTIDE SEQUENCE [LARGE SCALE GENOMIC DNA]</scope>
    <source>
        <strain>KBAB4</strain>
    </source>
</reference>
<keyword id="KW-0963">Cytoplasm</keyword>
<keyword id="KW-0413">Isomerase</keyword>
<keyword id="KW-0464">Manganese</keyword>
<keyword id="KW-0479">Metal-binding</keyword>
<name>DEOB_BACMK</name>
<feature type="chain" id="PRO_1000133063" description="Phosphopentomutase">
    <location>
        <begin position="1"/>
        <end position="394"/>
    </location>
</feature>
<feature type="binding site" evidence="1">
    <location>
        <position position="13"/>
    </location>
    <ligand>
        <name>Mn(2+)</name>
        <dbReference type="ChEBI" id="CHEBI:29035"/>
        <label>1</label>
    </ligand>
</feature>
<feature type="binding site" evidence="1">
    <location>
        <position position="286"/>
    </location>
    <ligand>
        <name>Mn(2+)</name>
        <dbReference type="ChEBI" id="CHEBI:29035"/>
        <label>2</label>
    </ligand>
</feature>
<feature type="binding site" evidence="1">
    <location>
        <position position="291"/>
    </location>
    <ligand>
        <name>Mn(2+)</name>
        <dbReference type="ChEBI" id="CHEBI:29035"/>
        <label>2</label>
    </ligand>
</feature>
<feature type="binding site" evidence="1">
    <location>
        <position position="327"/>
    </location>
    <ligand>
        <name>Mn(2+)</name>
        <dbReference type="ChEBI" id="CHEBI:29035"/>
        <label>1</label>
    </ligand>
</feature>
<feature type="binding site" evidence="1">
    <location>
        <position position="328"/>
    </location>
    <ligand>
        <name>Mn(2+)</name>
        <dbReference type="ChEBI" id="CHEBI:29035"/>
        <label>1</label>
    </ligand>
</feature>
<feature type="binding site" evidence="1">
    <location>
        <position position="339"/>
    </location>
    <ligand>
        <name>Mn(2+)</name>
        <dbReference type="ChEBI" id="CHEBI:29035"/>
        <label>2</label>
    </ligand>
</feature>
<proteinExistence type="inferred from homology"/>
<comment type="function">
    <text evidence="1">Isomerase that catalyzes the conversion of deoxy-ribose 1-phosphate (dRib-1-P) and ribose 1-phosphate (Rib-1-P) to deoxy-ribose 5-phosphate (dRib-5-P) and ribose 5-phosphate (Rib-5-P), respectively.</text>
</comment>
<comment type="catalytic activity">
    <reaction evidence="1">
        <text>2-deoxy-alpha-D-ribose 1-phosphate = 2-deoxy-D-ribose 5-phosphate</text>
        <dbReference type="Rhea" id="RHEA:27658"/>
        <dbReference type="ChEBI" id="CHEBI:57259"/>
        <dbReference type="ChEBI" id="CHEBI:62877"/>
        <dbReference type="EC" id="5.4.2.7"/>
    </reaction>
</comment>
<comment type="catalytic activity">
    <reaction evidence="1">
        <text>alpha-D-ribose 1-phosphate = D-ribose 5-phosphate</text>
        <dbReference type="Rhea" id="RHEA:18793"/>
        <dbReference type="ChEBI" id="CHEBI:57720"/>
        <dbReference type="ChEBI" id="CHEBI:78346"/>
        <dbReference type="EC" id="5.4.2.7"/>
    </reaction>
</comment>
<comment type="cofactor">
    <cofactor evidence="1">
        <name>Mn(2+)</name>
        <dbReference type="ChEBI" id="CHEBI:29035"/>
    </cofactor>
    <text evidence="1">Binds 2 manganese ions.</text>
</comment>
<comment type="pathway">
    <text evidence="1">Carbohydrate degradation; 2-deoxy-D-ribose 1-phosphate degradation; D-glyceraldehyde 3-phosphate and acetaldehyde from 2-deoxy-alpha-D-ribose 1-phosphate: step 1/2.</text>
</comment>
<comment type="subcellular location">
    <subcellularLocation>
        <location evidence="1">Cytoplasm</location>
    </subcellularLocation>
</comment>
<comment type="similarity">
    <text evidence="1">Belongs to the phosphopentomutase family.</text>
</comment>
<protein>
    <recommendedName>
        <fullName evidence="1">Phosphopentomutase</fullName>
        <ecNumber evidence="1">5.4.2.7</ecNumber>
    </recommendedName>
    <alternativeName>
        <fullName evidence="1">Phosphodeoxyribomutase</fullName>
    </alternativeName>
</protein>
<organism>
    <name type="scientific">Bacillus mycoides (strain KBAB4)</name>
    <name type="common">Bacillus weihenstephanensis</name>
    <dbReference type="NCBI Taxonomy" id="315730"/>
    <lineage>
        <taxon>Bacteria</taxon>
        <taxon>Bacillati</taxon>
        <taxon>Bacillota</taxon>
        <taxon>Bacilli</taxon>
        <taxon>Bacillales</taxon>
        <taxon>Bacillaceae</taxon>
        <taxon>Bacillus</taxon>
        <taxon>Bacillus cereus group</taxon>
    </lineage>
</organism>
<accession>A9VFJ2</accession>